<organism>
    <name type="scientific">Bos taurus</name>
    <name type="common">Bovine</name>
    <dbReference type="NCBI Taxonomy" id="9913"/>
    <lineage>
        <taxon>Eukaryota</taxon>
        <taxon>Metazoa</taxon>
        <taxon>Chordata</taxon>
        <taxon>Craniata</taxon>
        <taxon>Vertebrata</taxon>
        <taxon>Euteleostomi</taxon>
        <taxon>Mammalia</taxon>
        <taxon>Eutheria</taxon>
        <taxon>Laurasiatheria</taxon>
        <taxon>Artiodactyla</taxon>
        <taxon>Ruminantia</taxon>
        <taxon>Pecora</taxon>
        <taxon>Bovidae</taxon>
        <taxon>Bovinae</taxon>
        <taxon>Bos</taxon>
    </lineage>
</organism>
<name>IPKG_BOVIN</name>
<sequence length="76" mass="7904">MMEVESSYSDFISCDRSGRRNAVPDIQGDSEAVSVRKLAGDMGELALEGAEGQAEVGTSDKEASSQPESSDGTTSS</sequence>
<accession>Q7YQJ3</accession>
<gene>
    <name type="primary">PKIG</name>
</gene>
<proteinExistence type="inferred from homology"/>
<feature type="chain" id="PRO_0000154541" description="cAMP-dependent protein kinase inhibitor gamma">
    <location>
        <begin position="1"/>
        <end position="76"/>
    </location>
</feature>
<feature type="region of interest" description="Disordered" evidence="2">
    <location>
        <begin position="1"/>
        <end position="25"/>
    </location>
</feature>
<feature type="region of interest" description="Disordered" evidence="2">
    <location>
        <begin position="48"/>
        <end position="76"/>
    </location>
</feature>
<feature type="compositionally biased region" description="Polar residues" evidence="2">
    <location>
        <begin position="1"/>
        <end position="10"/>
    </location>
</feature>
<feature type="compositionally biased region" description="Polar residues" evidence="2">
    <location>
        <begin position="64"/>
        <end position="76"/>
    </location>
</feature>
<reference key="1">
    <citation type="submission" date="2003-07" db="EMBL/GenBank/DDBJ databases">
        <title>Cloning of Bos taurus protein kinase inhibitor gamma (Pkig).</title>
        <authorList>
            <person name="Zhou G."/>
            <person name="Li W."/>
            <person name="Yu L."/>
            <person name="Wang J."/>
            <person name="Zhao S."/>
        </authorList>
    </citation>
    <scope>NUCLEOTIDE SEQUENCE [MRNA]</scope>
</reference>
<dbReference type="EMBL" id="AY339896">
    <property type="protein sequence ID" value="AAQ17071.1"/>
    <property type="molecule type" value="mRNA"/>
</dbReference>
<dbReference type="RefSeq" id="NP_991381.1">
    <property type="nucleotide sequence ID" value="NM_205812.1"/>
</dbReference>
<dbReference type="FunCoup" id="Q7YQJ3">
    <property type="interactions" value="56"/>
</dbReference>
<dbReference type="STRING" id="9913.ENSBTAP00000041067"/>
<dbReference type="PaxDb" id="9913-ENSBTAP00000041067"/>
<dbReference type="GeneID" id="404169"/>
<dbReference type="KEGG" id="bta:404169"/>
<dbReference type="CTD" id="11142"/>
<dbReference type="eggNOG" id="ENOG502SBS3">
    <property type="taxonomic scope" value="Eukaryota"/>
</dbReference>
<dbReference type="InParanoid" id="Q7YQJ3"/>
<dbReference type="OrthoDB" id="8556393at2759"/>
<dbReference type="Proteomes" id="UP000009136">
    <property type="component" value="Unplaced"/>
</dbReference>
<dbReference type="GO" id="GO:0005737">
    <property type="term" value="C:cytoplasm"/>
    <property type="evidence" value="ECO:0000318"/>
    <property type="project" value="GO_Central"/>
</dbReference>
<dbReference type="GO" id="GO:0005634">
    <property type="term" value="C:nucleus"/>
    <property type="evidence" value="ECO:0000318"/>
    <property type="project" value="GO_Central"/>
</dbReference>
<dbReference type="GO" id="GO:0004862">
    <property type="term" value="F:cAMP-dependent protein kinase inhibitor activity"/>
    <property type="evidence" value="ECO:0000318"/>
    <property type="project" value="GO_Central"/>
</dbReference>
<dbReference type="InterPro" id="IPR004171">
    <property type="entry name" value="cAMP_dep_PKI"/>
</dbReference>
<dbReference type="PANTHER" id="PTHR15416">
    <property type="entry name" value="CAMP-DEPENDENT PROTEIN KINASE INHIBITOR/PKI"/>
    <property type="match status" value="1"/>
</dbReference>
<dbReference type="Pfam" id="PF02827">
    <property type="entry name" value="PKI"/>
    <property type="match status" value="1"/>
</dbReference>
<dbReference type="PIRSF" id="PIRSF001667">
    <property type="entry name" value="PKI"/>
    <property type="match status" value="1"/>
</dbReference>
<protein>
    <recommendedName>
        <fullName>cAMP-dependent protein kinase inhibitor gamma</fullName>
        <shortName>PKI-gamma</shortName>
    </recommendedName>
</protein>
<keyword id="KW-0649">Protein kinase inhibitor</keyword>
<keyword id="KW-1185">Reference proteome</keyword>
<comment type="function">
    <text evidence="1">Extremely potent competitive inhibitor of cAMP-dependent protein kinase activity, this protein interacts with the catalytic subunit of the enzyme after the cAMP-induced dissociation of its regulatory chains.</text>
</comment>
<comment type="similarity">
    <text evidence="3">Belongs to the PKI family.</text>
</comment>
<evidence type="ECO:0000250" key="1"/>
<evidence type="ECO:0000256" key="2">
    <source>
        <dbReference type="SAM" id="MobiDB-lite"/>
    </source>
</evidence>
<evidence type="ECO:0000305" key="3"/>